<organism>
    <name type="scientific">Salmonella paratyphi A (strain AKU_12601)</name>
    <dbReference type="NCBI Taxonomy" id="554290"/>
    <lineage>
        <taxon>Bacteria</taxon>
        <taxon>Pseudomonadati</taxon>
        <taxon>Pseudomonadota</taxon>
        <taxon>Gammaproteobacteria</taxon>
        <taxon>Enterobacterales</taxon>
        <taxon>Enterobacteriaceae</taxon>
        <taxon>Salmonella</taxon>
    </lineage>
</organism>
<comment type="function">
    <text evidence="1">The glycine cleavage system catalyzes the degradation of glycine. The H protein shuttles the methylamine group of glycine from the P protein to the T protein.</text>
</comment>
<comment type="cofactor">
    <cofactor evidence="1">
        <name>(R)-lipoate</name>
        <dbReference type="ChEBI" id="CHEBI:83088"/>
    </cofactor>
    <text evidence="1">Binds 1 lipoyl cofactor covalently.</text>
</comment>
<comment type="subunit">
    <text evidence="1">The glycine cleavage system is composed of four proteins: P, T, L and H.</text>
</comment>
<comment type="similarity">
    <text evidence="1">Belongs to the GcvH family.</text>
</comment>
<keyword id="KW-0450">Lipoyl</keyword>
<dbReference type="EMBL" id="FM200053">
    <property type="protein sequence ID" value="CAR60965.1"/>
    <property type="molecule type" value="Genomic_DNA"/>
</dbReference>
<dbReference type="RefSeq" id="WP_001295377.1">
    <property type="nucleotide sequence ID" value="NC_011147.1"/>
</dbReference>
<dbReference type="SMR" id="B5BFL9"/>
<dbReference type="GeneID" id="93779098"/>
<dbReference type="KEGG" id="sek:SSPA2724"/>
<dbReference type="HOGENOM" id="CLU_097408_2_1_6"/>
<dbReference type="Proteomes" id="UP000001869">
    <property type="component" value="Chromosome"/>
</dbReference>
<dbReference type="GO" id="GO:0005829">
    <property type="term" value="C:cytosol"/>
    <property type="evidence" value="ECO:0007669"/>
    <property type="project" value="TreeGrafter"/>
</dbReference>
<dbReference type="GO" id="GO:0005960">
    <property type="term" value="C:glycine cleavage complex"/>
    <property type="evidence" value="ECO:0007669"/>
    <property type="project" value="InterPro"/>
</dbReference>
<dbReference type="GO" id="GO:0019464">
    <property type="term" value="P:glycine decarboxylation via glycine cleavage system"/>
    <property type="evidence" value="ECO:0007669"/>
    <property type="project" value="UniProtKB-UniRule"/>
</dbReference>
<dbReference type="CDD" id="cd06848">
    <property type="entry name" value="GCS_H"/>
    <property type="match status" value="1"/>
</dbReference>
<dbReference type="FunFam" id="2.40.50.100:FF:000011">
    <property type="entry name" value="Glycine cleavage system H protein"/>
    <property type="match status" value="1"/>
</dbReference>
<dbReference type="Gene3D" id="2.40.50.100">
    <property type="match status" value="1"/>
</dbReference>
<dbReference type="HAMAP" id="MF_00272">
    <property type="entry name" value="GcvH"/>
    <property type="match status" value="1"/>
</dbReference>
<dbReference type="InterPro" id="IPR003016">
    <property type="entry name" value="2-oxoA_DH_lipoyl-BS"/>
</dbReference>
<dbReference type="InterPro" id="IPR000089">
    <property type="entry name" value="Biotin_lipoyl"/>
</dbReference>
<dbReference type="InterPro" id="IPR002930">
    <property type="entry name" value="GCV_H"/>
</dbReference>
<dbReference type="InterPro" id="IPR033753">
    <property type="entry name" value="GCV_H/Fam206"/>
</dbReference>
<dbReference type="InterPro" id="IPR017453">
    <property type="entry name" value="GCV_H_sub"/>
</dbReference>
<dbReference type="InterPro" id="IPR011053">
    <property type="entry name" value="Single_hybrid_motif"/>
</dbReference>
<dbReference type="NCBIfam" id="TIGR00527">
    <property type="entry name" value="gcvH"/>
    <property type="match status" value="1"/>
</dbReference>
<dbReference type="NCBIfam" id="NF002270">
    <property type="entry name" value="PRK01202.1"/>
    <property type="match status" value="1"/>
</dbReference>
<dbReference type="PANTHER" id="PTHR11715">
    <property type="entry name" value="GLYCINE CLEAVAGE SYSTEM H PROTEIN"/>
    <property type="match status" value="1"/>
</dbReference>
<dbReference type="PANTHER" id="PTHR11715:SF3">
    <property type="entry name" value="GLYCINE CLEAVAGE SYSTEM H PROTEIN-RELATED"/>
    <property type="match status" value="1"/>
</dbReference>
<dbReference type="Pfam" id="PF01597">
    <property type="entry name" value="GCV_H"/>
    <property type="match status" value="1"/>
</dbReference>
<dbReference type="SUPFAM" id="SSF51230">
    <property type="entry name" value="Single hybrid motif"/>
    <property type="match status" value="1"/>
</dbReference>
<dbReference type="PROSITE" id="PS50968">
    <property type="entry name" value="BIOTINYL_LIPOYL"/>
    <property type="match status" value="1"/>
</dbReference>
<dbReference type="PROSITE" id="PS00189">
    <property type="entry name" value="LIPOYL"/>
    <property type="match status" value="1"/>
</dbReference>
<evidence type="ECO:0000255" key="1">
    <source>
        <dbReference type="HAMAP-Rule" id="MF_00272"/>
    </source>
</evidence>
<evidence type="ECO:0000255" key="2">
    <source>
        <dbReference type="PROSITE-ProRule" id="PRU01066"/>
    </source>
</evidence>
<feature type="chain" id="PRO_1000114549" description="Glycine cleavage system H protein">
    <location>
        <begin position="1"/>
        <end position="129"/>
    </location>
</feature>
<feature type="domain" description="Lipoyl-binding" evidence="2">
    <location>
        <begin position="24"/>
        <end position="106"/>
    </location>
</feature>
<feature type="modified residue" description="N6-lipoyllysine" evidence="1">
    <location>
        <position position="65"/>
    </location>
</feature>
<reference key="1">
    <citation type="journal article" date="2009" name="BMC Genomics">
        <title>Pseudogene accumulation in the evolutionary histories of Salmonella enterica serovars Paratyphi A and Typhi.</title>
        <authorList>
            <person name="Holt K.E."/>
            <person name="Thomson N.R."/>
            <person name="Wain J."/>
            <person name="Langridge G.C."/>
            <person name="Hasan R."/>
            <person name="Bhutta Z.A."/>
            <person name="Quail M.A."/>
            <person name="Norbertczak H."/>
            <person name="Walker D."/>
            <person name="Simmonds M."/>
            <person name="White B."/>
            <person name="Bason N."/>
            <person name="Mungall K."/>
            <person name="Dougan G."/>
            <person name="Parkhill J."/>
        </authorList>
    </citation>
    <scope>NUCLEOTIDE SEQUENCE [LARGE SCALE GENOMIC DNA]</scope>
    <source>
        <strain>AKU_12601</strain>
    </source>
</reference>
<accession>B5BFL9</accession>
<sequence length="129" mass="13811">MSNVPAELKYSKEHEWLRKEADGTYTVGITEHAQELLGDMVFVDLPEVGATVSAGDDCAVAESVKAASDIYAPVSGEIVAVNDALSDSPELVNSEPYAGGWIFKIKASDESELESLLDATAYEALLEDE</sequence>
<name>GCSH_SALPK</name>
<proteinExistence type="inferred from homology"/>
<protein>
    <recommendedName>
        <fullName evidence="1">Glycine cleavage system H protein</fullName>
    </recommendedName>
</protein>
<gene>
    <name evidence="1" type="primary">gcvH</name>
    <name type="ordered locus">SSPA2724</name>
</gene>